<evidence type="ECO:0000255" key="1">
    <source>
        <dbReference type="HAMAP-Rule" id="MF_01302"/>
    </source>
</evidence>
<evidence type="ECO:0000305" key="2"/>
<keyword id="KW-1185">Reference proteome</keyword>
<keyword id="KW-0687">Ribonucleoprotein</keyword>
<keyword id="KW-0689">Ribosomal protein</keyword>
<keyword id="KW-0694">RNA-binding</keyword>
<keyword id="KW-0699">rRNA-binding</keyword>
<feature type="chain" id="PRO_0000290807" description="Small ribosomal subunit protein uS8">
    <location>
        <begin position="1"/>
        <end position="132"/>
    </location>
</feature>
<sequence>MTMTDPIADMLTRLRNASAAKHETVDMPYSKFKANIAEILKREGYIKDFTAKEAKVGQTLEVTLKYGPNGERSIQGIKRISKPGLRRYAKSDALPMPLGGLGIAIISTSSGLLTQKECLDRGIGGEIVAFVW</sequence>
<reference key="1">
    <citation type="submission" date="2006-12" db="EMBL/GenBank/DDBJ databases">
        <title>Bifidobacterium adolescentis complete genome sequence.</title>
        <authorList>
            <person name="Suzuki T."/>
            <person name="Tsuda Y."/>
            <person name="Kanou N."/>
            <person name="Inoue T."/>
            <person name="Kumazaki K."/>
            <person name="Nagano S."/>
            <person name="Hirai S."/>
            <person name="Tanaka K."/>
            <person name="Watanabe K."/>
        </authorList>
    </citation>
    <scope>NUCLEOTIDE SEQUENCE [LARGE SCALE GENOMIC DNA]</scope>
    <source>
        <strain>ATCC 15703 / DSM 20083 / NCTC 11814 / E194a</strain>
    </source>
</reference>
<organism>
    <name type="scientific">Bifidobacterium adolescentis (strain ATCC 15703 / DSM 20083 / NCTC 11814 / E194a)</name>
    <dbReference type="NCBI Taxonomy" id="367928"/>
    <lineage>
        <taxon>Bacteria</taxon>
        <taxon>Bacillati</taxon>
        <taxon>Actinomycetota</taxon>
        <taxon>Actinomycetes</taxon>
        <taxon>Bifidobacteriales</taxon>
        <taxon>Bifidobacteriaceae</taxon>
        <taxon>Bifidobacterium</taxon>
    </lineage>
</organism>
<gene>
    <name evidence="1" type="primary">rpsH</name>
    <name type="ordered locus">BAD_0335</name>
</gene>
<protein>
    <recommendedName>
        <fullName evidence="1">Small ribosomal subunit protein uS8</fullName>
    </recommendedName>
    <alternativeName>
        <fullName evidence="2">30S ribosomal protein S8</fullName>
    </alternativeName>
</protein>
<comment type="function">
    <text evidence="1">One of the primary rRNA binding proteins, it binds directly to 16S rRNA central domain where it helps coordinate assembly of the platform of the 30S subunit.</text>
</comment>
<comment type="subunit">
    <text evidence="1">Part of the 30S ribosomal subunit. Contacts proteins S5 and S12.</text>
</comment>
<comment type="similarity">
    <text evidence="1">Belongs to the universal ribosomal protein uS8 family.</text>
</comment>
<name>RS8_BIFAA</name>
<accession>A1A083</accession>
<proteinExistence type="inferred from homology"/>
<dbReference type="EMBL" id="AP009256">
    <property type="protein sequence ID" value="BAF39116.1"/>
    <property type="molecule type" value="Genomic_DNA"/>
</dbReference>
<dbReference type="RefSeq" id="WP_003808048.1">
    <property type="nucleotide sequence ID" value="NZ_CAXVNC010000001.1"/>
</dbReference>
<dbReference type="SMR" id="A1A083"/>
<dbReference type="STRING" id="367928.BAD_0335"/>
<dbReference type="PaxDb" id="1680-BADO_0342"/>
<dbReference type="GeneID" id="97501895"/>
<dbReference type="KEGG" id="bad:BAD_0335"/>
<dbReference type="HOGENOM" id="CLU_098428_0_1_11"/>
<dbReference type="Proteomes" id="UP000008702">
    <property type="component" value="Chromosome"/>
</dbReference>
<dbReference type="GO" id="GO:1990904">
    <property type="term" value="C:ribonucleoprotein complex"/>
    <property type="evidence" value="ECO:0007669"/>
    <property type="project" value="UniProtKB-KW"/>
</dbReference>
<dbReference type="GO" id="GO:0005840">
    <property type="term" value="C:ribosome"/>
    <property type="evidence" value="ECO:0007669"/>
    <property type="project" value="UniProtKB-KW"/>
</dbReference>
<dbReference type="GO" id="GO:0019843">
    <property type="term" value="F:rRNA binding"/>
    <property type="evidence" value="ECO:0007669"/>
    <property type="project" value="UniProtKB-UniRule"/>
</dbReference>
<dbReference type="GO" id="GO:0003735">
    <property type="term" value="F:structural constituent of ribosome"/>
    <property type="evidence" value="ECO:0007669"/>
    <property type="project" value="InterPro"/>
</dbReference>
<dbReference type="GO" id="GO:0006412">
    <property type="term" value="P:translation"/>
    <property type="evidence" value="ECO:0007669"/>
    <property type="project" value="UniProtKB-UniRule"/>
</dbReference>
<dbReference type="FunFam" id="3.30.1370.30:FF:000002">
    <property type="entry name" value="30S ribosomal protein S8"/>
    <property type="match status" value="1"/>
</dbReference>
<dbReference type="FunFam" id="3.30.1490.10:FF:000001">
    <property type="entry name" value="30S ribosomal protein S8"/>
    <property type="match status" value="1"/>
</dbReference>
<dbReference type="Gene3D" id="3.30.1370.30">
    <property type="match status" value="1"/>
</dbReference>
<dbReference type="Gene3D" id="3.30.1490.10">
    <property type="match status" value="1"/>
</dbReference>
<dbReference type="HAMAP" id="MF_01302_B">
    <property type="entry name" value="Ribosomal_uS8_B"/>
    <property type="match status" value="1"/>
</dbReference>
<dbReference type="InterPro" id="IPR000630">
    <property type="entry name" value="Ribosomal_uS8"/>
</dbReference>
<dbReference type="InterPro" id="IPR035987">
    <property type="entry name" value="Ribosomal_uS8_sf"/>
</dbReference>
<dbReference type="NCBIfam" id="NF001109">
    <property type="entry name" value="PRK00136.1"/>
    <property type="match status" value="1"/>
</dbReference>
<dbReference type="PANTHER" id="PTHR11758">
    <property type="entry name" value="40S RIBOSOMAL PROTEIN S15A"/>
    <property type="match status" value="1"/>
</dbReference>
<dbReference type="Pfam" id="PF00410">
    <property type="entry name" value="Ribosomal_S8"/>
    <property type="match status" value="1"/>
</dbReference>
<dbReference type="SUPFAM" id="SSF56047">
    <property type="entry name" value="Ribosomal protein S8"/>
    <property type="match status" value="1"/>
</dbReference>